<dbReference type="EMBL" id="CP001113">
    <property type="protein sequence ID" value="ACF62272.1"/>
    <property type="molecule type" value="Genomic_DNA"/>
</dbReference>
<dbReference type="RefSeq" id="WP_001152701.1">
    <property type="nucleotide sequence ID" value="NZ_CCMR01000004.1"/>
</dbReference>
<dbReference type="SMR" id="B4SUV4"/>
<dbReference type="KEGG" id="see:SNSL254_A3724"/>
<dbReference type="HOGENOM" id="CLU_180796_4_2_6"/>
<dbReference type="Proteomes" id="UP000008824">
    <property type="component" value="Chromosome"/>
</dbReference>
<dbReference type="Gene3D" id="1.20.5.300">
    <property type="match status" value="1"/>
</dbReference>
<dbReference type="HAMAP" id="MF_00715">
    <property type="entry name" value="SlyX"/>
    <property type="match status" value="1"/>
</dbReference>
<dbReference type="InterPro" id="IPR007236">
    <property type="entry name" value="SlyX"/>
</dbReference>
<dbReference type="NCBIfam" id="NF002750">
    <property type="entry name" value="PRK02793.1"/>
    <property type="match status" value="1"/>
</dbReference>
<dbReference type="PANTHER" id="PTHR36508">
    <property type="entry name" value="PROTEIN SLYX"/>
    <property type="match status" value="1"/>
</dbReference>
<dbReference type="PANTHER" id="PTHR36508:SF1">
    <property type="entry name" value="PROTEIN SLYX"/>
    <property type="match status" value="1"/>
</dbReference>
<dbReference type="Pfam" id="PF04102">
    <property type="entry name" value="SlyX"/>
    <property type="match status" value="1"/>
</dbReference>
<accession>B4SUV4</accession>
<protein>
    <recommendedName>
        <fullName evidence="1">Protein SlyX</fullName>
    </recommendedName>
</protein>
<proteinExistence type="inferred from homology"/>
<feature type="chain" id="PRO_1000195854" description="Protein SlyX">
    <location>
        <begin position="1"/>
        <end position="72"/>
    </location>
</feature>
<feature type="region of interest" description="Disordered" evidence="2">
    <location>
        <begin position="53"/>
        <end position="72"/>
    </location>
</feature>
<feature type="compositionally biased region" description="Polar residues" evidence="2">
    <location>
        <begin position="55"/>
        <end position="65"/>
    </location>
</feature>
<comment type="similarity">
    <text evidence="1">Belongs to the SlyX family.</text>
</comment>
<evidence type="ECO:0000255" key="1">
    <source>
        <dbReference type="HAMAP-Rule" id="MF_00715"/>
    </source>
</evidence>
<evidence type="ECO:0000256" key="2">
    <source>
        <dbReference type="SAM" id="MobiDB-lite"/>
    </source>
</evidence>
<gene>
    <name evidence="1" type="primary">slyX</name>
    <name type="ordered locus">SNSL254_A3724</name>
</gene>
<sequence length="72" mass="8260">MQDITMEARLAELESRLAFQEITIEELNLTVTAHEMEMAKLRDHLRLLTEKLKASQPSNIASQAEETPPPHY</sequence>
<reference key="1">
    <citation type="journal article" date="2011" name="J. Bacteriol.">
        <title>Comparative genomics of 28 Salmonella enterica isolates: evidence for CRISPR-mediated adaptive sublineage evolution.</title>
        <authorList>
            <person name="Fricke W.F."/>
            <person name="Mammel M.K."/>
            <person name="McDermott P.F."/>
            <person name="Tartera C."/>
            <person name="White D.G."/>
            <person name="Leclerc J.E."/>
            <person name="Ravel J."/>
            <person name="Cebula T.A."/>
        </authorList>
    </citation>
    <scope>NUCLEOTIDE SEQUENCE [LARGE SCALE GENOMIC DNA]</scope>
    <source>
        <strain>SL254</strain>
    </source>
</reference>
<organism>
    <name type="scientific">Salmonella newport (strain SL254)</name>
    <dbReference type="NCBI Taxonomy" id="423368"/>
    <lineage>
        <taxon>Bacteria</taxon>
        <taxon>Pseudomonadati</taxon>
        <taxon>Pseudomonadota</taxon>
        <taxon>Gammaproteobacteria</taxon>
        <taxon>Enterobacterales</taxon>
        <taxon>Enterobacteriaceae</taxon>
        <taxon>Salmonella</taxon>
    </lineage>
</organism>
<name>SLYX_SALNS</name>